<organism>
    <name type="scientific">Chlamydia trachomatis serovar A (strain ATCC VR-571B / DSM 19440 / HAR-13)</name>
    <dbReference type="NCBI Taxonomy" id="315277"/>
    <lineage>
        <taxon>Bacteria</taxon>
        <taxon>Pseudomonadati</taxon>
        <taxon>Chlamydiota</taxon>
        <taxon>Chlamydiia</taxon>
        <taxon>Chlamydiales</taxon>
        <taxon>Chlamydiaceae</taxon>
        <taxon>Chlamydia/Chlamydophila group</taxon>
        <taxon>Chlamydia</taxon>
    </lineage>
</organism>
<keyword id="KW-0687">Ribonucleoprotein</keyword>
<keyword id="KW-0689">Ribosomal protein</keyword>
<keyword id="KW-0694">RNA-binding</keyword>
<keyword id="KW-0699">rRNA-binding</keyword>
<evidence type="ECO:0000255" key="1">
    <source>
        <dbReference type="HAMAP-Rule" id="MF_01310"/>
    </source>
</evidence>
<evidence type="ECO:0000305" key="2"/>
<protein>
    <recommendedName>
        <fullName evidence="1">Small ribosomal subunit protein uS11</fullName>
    </recommendedName>
    <alternativeName>
        <fullName evidence="2">30S ribosomal protein S11</fullName>
    </alternativeName>
</protein>
<accession>Q3KLI9</accession>
<dbReference type="EMBL" id="CP000051">
    <property type="protein sequence ID" value="AAX50783.1"/>
    <property type="molecule type" value="Genomic_DNA"/>
</dbReference>
<dbReference type="RefSeq" id="WP_011324759.1">
    <property type="nucleotide sequence ID" value="NC_007429.1"/>
</dbReference>
<dbReference type="SMR" id="Q3KLI9"/>
<dbReference type="KEGG" id="cta:CTA_0557"/>
<dbReference type="HOGENOM" id="CLU_072439_5_0_0"/>
<dbReference type="Proteomes" id="UP000002532">
    <property type="component" value="Chromosome"/>
</dbReference>
<dbReference type="GO" id="GO:1990904">
    <property type="term" value="C:ribonucleoprotein complex"/>
    <property type="evidence" value="ECO:0007669"/>
    <property type="project" value="UniProtKB-KW"/>
</dbReference>
<dbReference type="GO" id="GO:0005840">
    <property type="term" value="C:ribosome"/>
    <property type="evidence" value="ECO:0007669"/>
    <property type="project" value="UniProtKB-KW"/>
</dbReference>
<dbReference type="GO" id="GO:0019843">
    <property type="term" value="F:rRNA binding"/>
    <property type="evidence" value="ECO:0007669"/>
    <property type="project" value="UniProtKB-UniRule"/>
</dbReference>
<dbReference type="GO" id="GO:0003735">
    <property type="term" value="F:structural constituent of ribosome"/>
    <property type="evidence" value="ECO:0007669"/>
    <property type="project" value="InterPro"/>
</dbReference>
<dbReference type="GO" id="GO:0006412">
    <property type="term" value="P:translation"/>
    <property type="evidence" value="ECO:0007669"/>
    <property type="project" value="UniProtKB-UniRule"/>
</dbReference>
<dbReference type="FunFam" id="3.30.420.80:FF:000004">
    <property type="entry name" value="30S ribosomal protein S11"/>
    <property type="match status" value="1"/>
</dbReference>
<dbReference type="Gene3D" id="3.30.420.80">
    <property type="entry name" value="Ribosomal protein S11"/>
    <property type="match status" value="1"/>
</dbReference>
<dbReference type="HAMAP" id="MF_01310">
    <property type="entry name" value="Ribosomal_uS11"/>
    <property type="match status" value="1"/>
</dbReference>
<dbReference type="InterPro" id="IPR001971">
    <property type="entry name" value="Ribosomal_uS11"/>
</dbReference>
<dbReference type="InterPro" id="IPR019981">
    <property type="entry name" value="Ribosomal_uS11_bac-type"/>
</dbReference>
<dbReference type="InterPro" id="IPR018102">
    <property type="entry name" value="Ribosomal_uS11_CS"/>
</dbReference>
<dbReference type="InterPro" id="IPR036967">
    <property type="entry name" value="Ribosomal_uS11_sf"/>
</dbReference>
<dbReference type="NCBIfam" id="NF003698">
    <property type="entry name" value="PRK05309.1"/>
    <property type="match status" value="1"/>
</dbReference>
<dbReference type="NCBIfam" id="TIGR03632">
    <property type="entry name" value="uS11_bact"/>
    <property type="match status" value="1"/>
</dbReference>
<dbReference type="PANTHER" id="PTHR11759">
    <property type="entry name" value="40S RIBOSOMAL PROTEIN S14/30S RIBOSOMAL PROTEIN S11"/>
    <property type="match status" value="1"/>
</dbReference>
<dbReference type="Pfam" id="PF00411">
    <property type="entry name" value="Ribosomal_S11"/>
    <property type="match status" value="1"/>
</dbReference>
<dbReference type="PIRSF" id="PIRSF002131">
    <property type="entry name" value="Ribosomal_S11"/>
    <property type="match status" value="1"/>
</dbReference>
<dbReference type="SUPFAM" id="SSF53137">
    <property type="entry name" value="Translational machinery components"/>
    <property type="match status" value="1"/>
</dbReference>
<dbReference type="PROSITE" id="PS00054">
    <property type="entry name" value="RIBOSOMAL_S11"/>
    <property type="match status" value="1"/>
</dbReference>
<proteinExistence type="inferred from homology"/>
<comment type="function">
    <text evidence="1">Located on the platform of the 30S subunit, it bridges several disparate RNA helices of the 16S rRNA. Forms part of the Shine-Dalgarno cleft in the 70S ribosome.</text>
</comment>
<comment type="subunit">
    <text evidence="1">Part of the 30S ribosomal subunit. Interacts with proteins S7 and S18. Binds to IF-3.</text>
</comment>
<comment type="similarity">
    <text evidence="1">Belongs to the universal ribosomal protein uS11 family.</text>
</comment>
<feature type="chain" id="PRO_0000230394" description="Small ribosomal subunit protein uS11">
    <location>
        <begin position="1"/>
        <end position="132"/>
    </location>
</feature>
<name>RS11_CHLTA</name>
<sequence length="132" mass="13808">MVKNQAQKKGVKRKQVKNIPSGIVHVKATFNNTIVTITDPAGNVISWASAGKVGYSGSRKSSAFAATVAAQDAAKAAMSSGLKEVEVGLKGTGAGRESAVRALISSGLIVSVIRDETPVPHNGCRPRKRRRV</sequence>
<reference key="1">
    <citation type="journal article" date="2005" name="Infect. Immun.">
        <title>Comparative genomic analysis of Chlamydia trachomatis oculotropic and genitotropic strains.</title>
        <authorList>
            <person name="Carlson J.H."/>
            <person name="Porcella S.F."/>
            <person name="McClarty G."/>
            <person name="Caldwell H.D."/>
        </authorList>
    </citation>
    <scope>NUCLEOTIDE SEQUENCE [LARGE SCALE GENOMIC DNA]</scope>
    <source>
        <strain>ATCC VR-571B / DSM 19440 / HAR-13</strain>
    </source>
</reference>
<gene>
    <name evidence="1" type="primary">rpsK</name>
    <name type="ordered locus">CTA_0557</name>
</gene>